<organism evidence="49">
    <name type="scientific">Salmonella typhimurium (strain LT2 / SGSC1412 / ATCC 700720)</name>
    <dbReference type="NCBI Taxonomy" id="99287"/>
    <lineage>
        <taxon>Bacteria</taxon>
        <taxon>Pseudomonadati</taxon>
        <taxon>Pseudomonadota</taxon>
        <taxon>Gammaproteobacteria</taxon>
        <taxon>Enterobacterales</taxon>
        <taxon>Enterobacteriaceae</taxon>
        <taxon>Salmonella</taxon>
    </lineage>
</organism>
<sequence>MKEYKILLVDDHEIIINGIMNALLPWPHFKIVEHVKNGLEVYNACCAYEPDILILDLSLPGINGLDIIPQLHQRWPAMNILVYTAYQQEYMTIKTLAAGANGYVLKSSSQQVLLAALQTVAVNKRYIDPTLNREAILAELNADTTNHQLLTLRERQVLKLIDEGYTNHGISEKLHISIKTVETHRMNMMRKLQVHKVTELLNCARRMRLIEY</sequence>
<evidence type="ECO:0000255" key="1">
    <source>
        <dbReference type="PROSITE-ProRule" id="PRU00169"/>
    </source>
</evidence>
<evidence type="ECO:0000255" key="2">
    <source>
        <dbReference type="PROSITE-ProRule" id="PRU00411"/>
    </source>
</evidence>
<evidence type="ECO:0000269" key="3">
    <source>
    </source>
</evidence>
<evidence type="ECO:0000269" key="4">
    <source>
    </source>
</evidence>
<evidence type="ECO:0000269" key="5">
    <source>
    </source>
</evidence>
<evidence type="ECO:0000269" key="6">
    <source>
    </source>
</evidence>
<evidence type="ECO:0000269" key="7">
    <source>
    </source>
</evidence>
<evidence type="ECO:0000269" key="8">
    <source>
    </source>
</evidence>
<evidence type="ECO:0000269" key="9">
    <source>
    </source>
</evidence>
<evidence type="ECO:0000269" key="10">
    <source>
    </source>
</evidence>
<evidence type="ECO:0000269" key="11">
    <source>
    </source>
</evidence>
<evidence type="ECO:0000269" key="12">
    <source>
    </source>
</evidence>
<evidence type="ECO:0000269" key="13">
    <source>
    </source>
</evidence>
<evidence type="ECO:0000269" key="14">
    <source>
    </source>
</evidence>
<evidence type="ECO:0000269" key="15">
    <source>
    </source>
</evidence>
<evidence type="ECO:0000269" key="16">
    <source>
    </source>
</evidence>
<evidence type="ECO:0000269" key="17">
    <source>
    </source>
</evidence>
<evidence type="ECO:0000269" key="18">
    <source>
    </source>
</evidence>
<evidence type="ECO:0000269" key="19">
    <source>
    </source>
</evidence>
<evidence type="ECO:0000269" key="20">
    <source>
    </source>
</evidence>
<evidence type="ECO:0000269" key="21">
    <source>
    </source>
</evidence>
<evidence type="ECO:0000269" key="22">
    <source>
    </source>
</evidence>
<evidence type="ECO:0000269" key="23">
    <source>
    </source>
</evidence>
<evidence type="ECO:0000269" key="24">
    <source>
    </source>
</evidence>
<evidence type="ECO:0000269" key="25">
    <source>
    </source>
</evidence>
<evidence type="ECO:0000303" key="26">
    <source>
    </source>
</evidence>
<evidence type="ECO:0000303" key="27">
    <source>
    </source>
</evidence>
<evidence type="ECO:0000303" key="28">
    <source>
    </source>
</evidence>
<evidence type="ECO:0000303" key="29">
    <source>
    </source>
</evidence>
<evidence type="ECO:0000303" key="30">
    <source>
    </source>
</evidence>
<evidence type="ECO:0000303" key="31">
    <source>
    </source>
</evidence>
<evidence type="ECO:0000303" key="32">
    <source>
    </source>
</evidence>
<evidence type="ECO:0000303" key="33">
    <source>
    </source>
</evidence>
<evidence type="ECO:0000303" key="34">
    <source>
    </source>
</evidence>
<evidence type="ECO:0000303" key="35">
    <source>
    </source>
</evidence>
<evidence type="ECO:0000303" key="36">
    <source>
    </source>
</evidence>
<evidence type="ECO:0000303" key="37">
    <source>
    </source>
</evidence>
<evidence type="ECO:0000303" key="38">
    <source>
    </source>
</evidence>
<evidence type="ECO:0000303" key="39">
    <source>
    </source>
</evidence>
<evidence type="ECO:0000303" key="40">
    <source>
    </source>
</evidence>
<evidence type="ECO:0000303" key="41">
    <source>
    </source>
</evidence>
<evidence type="ECO:0000303" key="42">
    <source>
    </source>
</evidence>
<evidence type="ECO:0000303" key="43">
    <source>
    </source>
</evidence>
<evidence type="ECO:0000303" key="44">
    <source>
    </source>
</evidence>
<evidence type="ECO:0000303" key="45">
    <source>
    </source>
</evidence>
<evidence type="ECO:0000305" key="46"/>
<evidence type="ECO:0000305" key="47">
    <source>
    </source>
</evidence>
<evidence type="ECO:0000312" key="48">
    <source>
        <dbReference type="EMBL" id="AAL20315.1"/>
    </source>
</evidence>
<evidence type="ECO:0000312" key="49">
    <source>
        <dbReference type="Proteomes" id="UP000001014"/>
    </source>
</evidence>
<gene>
    <name evidence="26" type="primary">ssrB</name>
    <name evidence="48" type="ordered locus">STM1391</name>
</gene>
<dbReference type="EMBL" id="AE006468">
    <property type="protein sequence ID" value="AAL20315.1"/>
    <property type="molecule type" value="Genomic_DNA"/>
</dbReference>
<dbReference type="RefSeq" id="NP_460356.1">
    <property type="nucleotide sequence ID" value="NC_003197.2"/>
</dbReference>
<dbReference type="RefSeq" id="WP_000666335.1">
    <property type="nucleotide sequence ID" value="NC_003197.2"/>
</dbReference>
<dbReference type="SMR" id="Q7CQM5"/>
<dbReference type="STRING" id="99287.STM1391"/>
<dbReference type="PaxDb" id="99287-STM1391"/>
<dbReference type="GeneID" id="1252909"/>
<dbReference type="KEGG" id="stm:STM1391"/>
<dbReference type="PATRIC" id="fig|99287.12.peg.1475"/>
<dbReference type="HOGENOM" id="CLU_000445_90_1_6"/>
<dbReference type="OMA" id="AIRREGM"/>
<dbReference type="PhylomeDB" id="Q7CQM5"/>
<dbReference type="BioCyc" id="SENT99287:STM1391-MONOMER"/>
<dbReference type="PHI-base" id="PHI:2677"/>
<dbReference type="Proteomes" id="UP000001014">
    <property type="component" value="Chromosome"/>
</dbReference>
<dbReference type="GO" id="GO:0005737">
    <property type="term" value="C:cytoplasm"/>
    <property type="evidence" value="ECO:0000314"/>
    <property type="project" value="UniProtKB"/>
</dbReference>
<dbReference type="GO" id="GO:0001216">
    <property type="term" value="F:DNA-binding transcription activator activity"/>
    <property type="evidence" value="ECO:0000314"/>
    <property type="project" value="UniProtKB"/>
</dbReference>
<dbReference type="GO" id="GO:0001217">
    <property type="term" value="F:DNA-binding transcription repressor activity"/>
    <property type="evidence" value="ECO:0000314"/>
    <property type="project" value="UniProtKB"/>
</dbReference>
<dbReference type="GO" id="GO:0000156">
    <property type="term" value="F:phosphorelay response regulator activity"/>
    <property type="evidence" value="ECO:0000314"/>
    <property type="project" value="UniProtKB"/>
</dbReference>
<dbReference type="GO" id="GO:0043565">
    <property type="term" value="F:sequence-specific DNA binding"/>
    <property type="evidence" value="ECO:0000314"/>
    <property type="project" value="UniProtKB"/>
</dbReference>
<dbReference type="GO" id="GO:0044374">
    <property type="term" value="F:sequence-specific DNA binding, bending"/>
    <property type="evidence" value="ECO:0000314"/>
    <property type="project" value="UniProtKB"/>
</dbReference>
<dbReference type="GO" id="GO:0000976">
    <property type="term" value="F:transcription cis-regulatory region binding"/>
    <property type="evidence" value="ECO:0000314"/>
    <property type="project" value="UniProtKB"/>
</dbReference>
<dbReference type="GO" id="GO:1902201">
    <property type="term" value="P:negative regulation of bacterial-type flagellum-dependent cell motility"/>
    <property type="evidence" value="ECO:0000315"/>
    <property type="project" value="UniProtKB"/>
</dbReference>
<dbReference type="GO" id="GO:0045893">
    <property type="term" value="P:positive regulation of DNA-templated transcription"/>
    <property type="evidence" value="ECO:0000315"/>
    <property type="project" value="UniProtKB"/>
</dbReference>
<dbReference type="GO" id="GO:1900192">
    <property type="term" value="P:positive regulation of single-species biofilm formation"/>
    <property type="evidence" value="ECO:0000315"/>
    <property type="project" value="UniProtKB"/>
</dbReference>
<dbReference type="GO" id="GO:0052170">
    <property type="term" value="P:symbiont-mediated suppression of host innate immune response"/>
    <property type="evidence" value="ECO:0000315"/>
    <property type="project" value="UniProtKB"/>
</dbReference>
<dbReference type="CDD" id="cd06170">
    <property type="entry name" value="LuxR_C_like"/>
    <property type="match status" value="1"/>
</dbReference>
<dbReference type="CDD" id="cd17535">
    <property type="entry name" value="REC_NarL-like"/>
    <property type="match status" value="1"/>
</dbReference>
<dbReference type="FunFam" id="3.40.50.2300:FF:000150">
    <property type="entry name" value="Two component system response regulator"/>
    <property type="match status" value="1"/>
</dbReference>
<dbReference type="Gene3D" id="3.40.50.2300">
    <property type="match status" value="1"/>
</dbReference>
<dbReference type="InterPro" id="IPR011006">
    <property type="entry name" value="CheY-like_superfamily"/>
</dbReference>
<dbReference type="InterPro" id="IPR016032">
    <property type="entry name" value="Sig_transdc_resp-reg_C-effctor"/>
</dbReference>
<dbReference type="InterPro" id="IPR001789">
    <property type="entry name" value="Sig_transdc_resp-reg_receiver"/>
</dbReference>
<dbReference type="InterPro" id="IPR000792">
    <property type="entry name" value="Tscrpt_reg_LuxR_C"/>
</dbReference>
<dbReference type="InterPro" id="IPR039420">
    <property type="entry name" value="WalR-like"/>
</dbReference>
<dbReference type="NCBIfam" id="NF011896">
    <property type="entry name" value="PRK15369.1"/>
    <property type="match status" value="1"/>
</dbReference>
<dbReference type="PANTHER" id="PTHR43214:SF3">
    <property type="entry name" value="RESPONSE REGULATOR UVRY"/>
    <property type="match status" value="1"/>
</dbReference>
<dbReference type="PANTHER" id="PTHR43214">
    <property type="entry name" value="TWO-COMPONENT RESPONSE REGULATOR"/>
    <property type="match status" value="1"/>
</dbReference>
<dbReference type="Pfam" id="PF00196">
    <property type="entry name" value="GerE"/>
    <property type="match status" value="1"/>
</dbReference>
<dbReference type="Pfam" id="PF00072">
    <property type="entry name" value="Response_reg"/>
    <property type="match status" value="1"/>
</dbReference>
<dbReference type="PRINTS" id="PR00038">
    <property type="entry name" value="HTHLUXR"/>
</dbReference>
<dbReference type="SMART" id="SM00421">
    <property type="entry name" value="HTH_LUXR"/>
    <property type="match status" value="1"/>
</dbReference>
<dbReference type="SMART" id="SM00448">
    <property type="entry name" value="REC"/>
    <property type="match status" value="1"/>
</dbReference>
<dbReference type="SUPFAM" id="SSF46894">
    <property type="entry name" value="C-terminal effector domain of the bipartite response regulators"/>
    <property type="match status" value="1"/>
</dbReference>
<dbReference type="SUPFAM" id="SSF52172">
    <property type="entry name" value="CheY-like"/>
    <property type="match status" value="1"/>
</dbReference>
<dbReference type="PROSITE" id="PS00622">
    <property type="entry name" value="HTH_LUXR_1"/>
    <property type="match status" value="1"/>
</dbReference>
<dbReference type="PROSITE" id="PS50043">
    <property type="entry name" value="HTH_LUXR_2"/>
    <property type="match status" value="1"/>
</dbReference>
<dbReference type="PROSITE" id="PS50110">
    <property type="entry name" value="RESPONSE_REGULATORY"/>
    <property type="match status" value="1"/>
</dbReference>
<reference evidence="49" key="1">
    <citation type="journal article" date="2001" name="Nature">
        <title>Complete genome sequence of Salmonella enterica serovar Typhimurium LT2.</title>
        <authorList>
            <person name="McClelland M."/>
            <person name="Sanderson K.E."/>
            <person name="Spieth J."/>
            <person name="Clifton S.W."/>
            <person name="Latreille P."/>
            <person name="Courtney L."/>
            <person name="Porwollik S."/>
            <person name="Ali J."/>
            <person name="Dante M."/>
            <person name="Du F."/>
            <person name="Hou S."/>
            <person name="Layman D."/>
            <person name="Leonard S."/>
            <person name="Nguyen C."/>
            <person name="Scott K."/>
            <person name="Holmes A."/>
            <person name="Grewal N."/>
            <person name="Mulvaney E."/>
            <person name="Ryan E."/>
            <person name="Sun H."/>
            <person name="Florea L."/>
            <person name="Miller W."/>
            <person name="Stoneking T."/>
            <person name="Nhan M."/>
            <person name="Waterston R."/>
            <person name="Wilson R.K."/>
        </authorList>
    </citation>
    <scope>NUCLEOTIDE SEQUENCE [LARGE SCALE GENOMIC DNA]</scope>
    <source>
        <strain evidence="49">LT2 / SGSC1412 / ATCC 700720</strain>
    </source>
</reference>
<reference evidence="46" key="2">
    <citation type="journal article" date="1999" name="Mol. Microbiol.">
        <title>Environmental regulation of Salmonella pathogenicity island 2 gene expression.</title>
        <authorList>
            <person name="Deiwick J."/>
            <person name="Nikolaus T."/>
            <person name="Erdogan S."/>
            <person name="Hensel M."/>
        </authorList>
    </citation>
    <scope>DISRUPTION PHENOTYPE</scope>
</reference>
<reference evidence="46" key="3">
    <citation type="journal article" date="2000" name="Mol. Microbiol.">
        <title>Salmonella SsrB activates a global regulon of horizontally acquired genes.</title>
        <authorList>
            <person name="Worley M.J."/>
            <person name="Ching K.H."/>
            <person name="Heffron F."/>
        </authorList>
    </citation>
    <scope>FUNCTION</scope>
    <scope>DISRUPTION PHENOTYPE</scope>
    <source>
        <strain evidence="27">14028s / SGSC 2262</strain>
    </source>
</reference>
<reference evidence="46" key="4">
    <citation type="journal article" date="2002" name="J. Bacteriol.">
        <title>Transcription of the SsrAB regulon is repressed by alkaline pH and is independent of PhoPQ and magnesium concentration.</title>
        <authorList>
            <person name="Miao E.A."/>
            <person name="Freeman J.A."/>
            <person name="Miller S.I."/>
        </authorList>
    </citation>
    <scope>FUNCTION</scope>
</reference>
<reference evidence="46" key="5">
    <citation type="journal article" date="2004" name="Mol. Microbiol.">
        <title>The response regulator SsrB activates transcription and binds to a region overlapping OmpR binding sites at Salmonella pathogenicity island 2.</title>
        <authorList>
            <person name="Feng X."/>
            <person name="Walthers D."/>
            <person name="Oropeza R."/>
            <person name="Kenney L.J."/>
        </authorList>
    </citation>
    <scope>FUNCTION</scope>
    <scope>SUBCELLULAR LOCATION</scope>
    <scope>PHOSPHORYLATION AT ASP-56</scope>
    <scope>DISRUPTION PHENOTYPE</scope>
    <scope>MUTAGENESIS OF ASP-56</scope>
    <source>
        <strain evidence="28">14028s / SGSC 2262</strain>
    </source>
</reference>
<reference evidence="46" key="6">
    <citation type="journal article" date="2005" name="PLoS Pathog.">
        <title>Salmonella pathogenicity island 2 is expressed prior to penetrating the intestine.</title>
        <authorList>
            <person name="Brown N.F."/>
            <person name="Vallance B.A."/>
            <person name="Coombes B.K."/>
            <person name="Valdez Y."/>
            <person name="Coburn B.A."/>
            <person name="Finlay B.B."/>
        </authorList>
    </citation>
    <scope>FUNCTION</scope>
    <scope>DISRUPTION PHENOTYPE</scope>
    <source>
        <strain evidence="29">SL1344</strain>
    </source>
</reference>
<reference evidence="46" key="7">
    <citation type="journal article" date="2007" name="Mol. Microbiol.">
        <title>The response regulator SsrB activates expression of diverse Salmonella pathogenicity island 2 promoters and counters silencing by the nucleoid-associated protein H-NS.</title>
        <authorList>
            <person name="Walthers D."/>
            <person name="Carroll R.K."/>
            <person name="Navarre W.W."/>
            <person name="Libby S.J."/>
            <person name="Fang F.C."/>
            <person name="Kenney L.J."/>
        </authorList>
    </citation>
    <scope>FUNCTION</scope>
    <scope>DISRUPTION PHENOTYPE</scope>
    <source>
        <strain evidence="30">14028s / SGSC 2262</strain>
    </source>
</reference>
<reference evidence="46" key="8">
    <citation type="journal article" date="2008" name="Vet. Microbiol.">
        <title>A limited role for SsrA/B in persistent Salmonella Typhimurium infections in pigs.</title>
        <authorList>
            <person name="Boyen F."/>
            <person name="Pasmans F."/>
            <person name="Van Immerseel F."/>
            <person name="Morgan E."/>
            <person name="Botteldoorn N."/>
            <person name="Heyndrickx M."/>
            <person name="Volf J."/>
            <person name="Favoreel H."/>
            <person name="Hernalsteens J.P."/>
            <person name="Ducatelle R."/>
            <person name="Haesebrouck F."/>
        </authorList>
    </citation>
    <scope>FUNCTION</scope>
    <scope>DISRUPTION PHENOTYPE</scope>
    <source>
        <strain evidence="31">112910a</strain>
    </source>
</reference>
<reference evidence="46" key="9">
    <citation type="journal article" date="2009" name="PLoS Pathog.">
        <title>Coordinated regulation of virulence during systemic infection of Salmonella enterica serovar Typhimurium.</title>
        <authorList>
            <person name="Yoon H."/>
            <person name="McDermott J.E."/>
            <person name="Porwollik S."/>
            <person name="McClelland M."/>
            <person name="Heffron F."/>
        </authorList>
    </citation>
    <scope>DISRUPTION PHENOTYPE</scope>
    <source>
        <strain evidence="33">14028s / SGSC 2262</strain>
    </source>
</reference>
<reference evidence="46" key="10">
    <citation type="journal article" date="2010" name="Infect. Immun.">
        <title>Systematic analysis of the SsrAB virulon of Salmonella enterica.</title>
        <authorList>
            <person name="Xu X."/>
            <person name="Hensel M."/>
        </authorList>
    </citation>
    <scope>DISRUPTION PHENOTYPE</scope>
    <source>
        <strain evidence="34">ATCC 14028 / SGSC 2980 / CDC 6516-60 / NCTC 12023</strain>
    </source>
</reference>
<reference evidence="46" key="11">
    <citation type="journal article" date="2010" name="PLoS Genet.">
        <title>Identification of the regulatory logic controlling Salmonella pathoadaptation by the SsrA-SsrB two-component system.</title>
        <authorList>
            <person name="Tomljenovic-Berube A.M."/>
            <person name="Mulder D.T."/>
            <person name="Whiteside M.D."/>
            <person name="Brinkman F.S."/>
            <person name="Coombes B.K."/>
        </authorList>
    </citation>
    <scope>FUNCTION</scope>
    <scope>DISRUPTION PHENOTYPE</scope>
    <source>
        <strain evidence="35">SL1344</strain>
    </source>
</reference>
<reference evidence="46" key="12">
    <citation type="journal article" date="2010" name="Proc. Natl. Acad. Sci. U.S.A.">
        <title>Redox sensor SsrB Cys203 enhances Salmonella fitness against nitric oxide generated in the host immune response to oral infection.</title>
        <authorList>
            <person name="Husain M."/>
            <person name="Jones-Carson J."/>
            <person name="Song M."/>
            <person name="McCollister B.D."/>
            <person name="Bourret T.J."/>
            <person name="Vazquez-Torres A."/>
        </authorList>
    </citation>
    <scope>FUNCTION</scope>
    <scope>SUBCELLULAR LOCATION</scope>
    <scope>S-NITROSYLATION AT CYS-203</scope>
    <scope>MUTAGENESIS OF CYS-203</scope>
</reference>
<reference evidence="46" key="13">
    <citation type="journal article" date="2011" name="J. Biol. Chem.">
        <title>Salmonella enterica response regulator SsrB relieves H-NS silencing by displacing H-NS bound in polymerization mode and directly activates transcription.</title>
        <authorList>
            <person name="Walthers D."/>
            <person name="Li Y."/>
            <person name="Liu Y."/>
            <person name="Anand G."/>
            <person name="Yan J."/>
            <person name="Kenney L.J."/>
        </authorList>
    </citation>
    <scope>FUNCTION</scope>
    <scope>DISRUPTION PHENOTYPE</scope>
    <source>
        <strain evidence="36">14028s / SGSC 2262</strain>
    </source>
</reference>
<reference evidence="46" key="14">
    <citation type="journal article" date="2012" name="J. Biol. Chem.">
        <title>Characterization of DalS, an ATP-binding cassette transporter for D-alanine, and its role in pathogenesis in Salmonella enterica.</title>
        <authorList>
            <person name="Osborne S.E."/>
            <person name="Tuinema B.R."/>
            <person name="Mok M.C."/>
            <person name="Lau P.S."/>
            <person name="Bui N.K."/>
            <person name="Tomljenovic-Berube A.M."/>
            <person name="Vollmer W."/>
            <person name="Zhang K."/>
            <person name="Junop M."/>
            <person name="Coombes B.K."/>
        </authorList>
    </citation>
    <scope>FUNCTION</scope>
    <scope>DISRUPTION PHENOTYPE</scope>
    <source>
        <strain evidence="37">SL1344</strain>
    </source>
</reference>
<reference evidence="46" key="15">
    <citation type="journal article" date="2014" name="MBio">
        <title>A horizontally acquired transcription factor coordinates Salmonella adaptations to host microenvironments.</title>
        <authorList>
            <person name="Brown N.F."/>
            <person name="Rogers L.D."/>
            <person name="Sanderson K.L."/>
            <person name="Gouw J.W."/>
            <person name="Hartland E.L."/>
            <person name="Foster L.J."/>
        </authorList>
    </citation>
    <scope>FUNCTION</scope>
    <scope>DISRUPTION PHENOTYPE</scope>
    <source>
        <strain evidence="38">SL1344</strain>
    </source>
</reference>
<reference evidence="46" key="16">
    <citation type="journal article" date="2016" name="Appl. Environ. Microbiol.">
        <title>Influence of Salmonella enterica Serovar Typhimurium ssrB on Colonization of Eastern Oysters (Crassostrea virginica) as Revealed by a Promoter Probe Screen.</title>
        <authorList>
            <person name="Cox C.E."/>
            <person name="Wright A.C."/>
            <person name="McClelland M."/>
            <person name="Teplitski M."/>
        </authorList>
    </citation>
    <scope>FUNCTION</scope>
    <scope>DISRUPTION PHENOTYPE</scope>
    <source>
        <strain evidence="39">14028s / SGSC 2262</strain>
    </source>
</reference>
<reference evidence="46" key="17">
    <citation type="journal article" date="2016" name="Elife">
        <title>The horizontally-acquired response regulator SsrB drives a Salmonella lifestyle switch by relieving biofilm silencing.</title>
        <authorList>
            <person name="Desai S.K."/>
            <person name="Winardhi R.S."/>
            <person name="Periasamy S."/>
            <person name="Dykas M.M."/>
            <person name="Jie Y."/>
            <person name="Kenney L.J."/>
        </authorList>
    </citation>
    <scope>FUNCTION</scope>
    <scope>PHOSPHORYLATION AT ASP-56</scope>
    <scope>DISRUPTION PHENOTYPE</scope>
    <scope>MUTAGENESIS OF ASP-56 AND LYS-179</scope>
    <source>
        <strain evidence="40">14028s / SGSC 2262</strain>
    </source>
</reference>
<reference evidence="46" key="18">
    <citation type="journal article" date="2017" name="PLoS Pathog.">
        <title>The transcriptional regulator SsrB is involved in a molecular switch controlling virulence lifestyles of Salmonella.</title>
        <authorList>
            <person name="Perez-Morales D."/>
            <person name="Banda M.M."/>
            <person name="Chau N.Y.E."/>
            <person name="Salgado H."/>
            <person name="Martinez-Flores I."/>
            <person name="Ibarra J.A."/>
            <person name="Ilyas B."/>
            <person name="Coombes B.K."/>
            <person name="Bustamante V.H."/>
        </authorList>
    </citation>
    <scope>FUNCTION</scope>
    <scope>DISRUPTION PHENOTYPE</scope>
    <scope>MUTAGENESIS OF ASP-56</scope>
    <source>
        <strain evidence="41">SL1344</strain>
    </source>
</reference>
<reference evidence="46" key="19">
    <citation type="journal article" date="2018" name="Cell Rep.">
        <title>Regulatory Evolution Drives Evasion of Host Inflammasomes by Salmonella Typhimurium.</title>
        <authorList>
            <person name="Ilyas B."/>
            <person name="Mulder D.T."/>
            <person name="Little D.J."/>
            <person name="Elhenawy W."/>
            <person name="Banda M.M."/>
            <person name="Perez-Morales D."/>
            <person name="Tsai C.N."/>
            <person name="Chau N.Y.E."/>
            <person name="Bustamante V.H."/>
            <person name="Coombes B.K."/>
        </authorList>
    </citation>
    <scope>FUNCTION</scope>
    <scope>MUTAGENESIS OF ASP-56</scope>
    <source>
        <strain evidence="42">SL1344</strain>
    </source>
</reference>
<reference evidence="46" key="20">
    <citation type="journal article" date="2019" name="Elife">
        <title>Single cell, super-resolution imaging reveals an acid pH-dependent conformational switch in SsrB regulates SPI-2.</title>
        <authorList>
            <person name="Liew A.T.F."/>
            <person name="Foo Y.H."/>
            <person name="Gao Y."/>
            <person name="Zangoui P."/>
            <person name="Singh M.K."/>
            <person name="Gulvady R."/>
            <person name="Kenney L.J."/>
        </authorList>
    </citation>
    <scope>FUNCTION</scope>
    <scope>INDUCTION</scope>
    <scope>DISRUPTION PHENOTYPE</scope>
    <scope>MUTAGENESIS OF ASP-56 AND LYS-179</scope>
    <source>
        <strain evidence="43">14028s / SGSC 2262</strain>
    </source>
</reference>
<reference evidence="46" key="21">
    <citation type="journal article" date="2020" name="Cell Chem. Biol.">
        <title>Targeting Two-Component Systems Uncovers a Small-Molecule Inhibitor of Salmonella Virulence.</title>
        <authorList>
            <person name="Tsai C.N."/>
            <person name="MacNair C.R."/>
            <person name="Cao M.P.T."/>
            <person name="Perry J.N."/>
            <person name="Magolan J."/>
            <person name="Brown E.D."/>
            <person name="Coombes B.K."/>
        </authorList>
    </citation>
    <scope>DISRUPTION PHENOTYPE</scope>
    <scope>MUTAGENESIS OF CYS-203</scope>
</reference>
<reference evidence="46" key="22">
    <citation type="journal article" date="2020" name="Nucleic Acids Res.">
        <title>Horizontally acquired regulatory gene activates ancestral regulatory system to promote Salmonella virulence.</title>
        <authorList>
            <person name="Choi J."/>
            <person name="Groisman E.A."/>
        </authorList>
    </citation>
    <scope>FUNCTION</scope>
    <scope>DISRUPTION PHENOTYPE</scope>
    <scope>MUTAGENESIS OF VAL-197</scope>
    <source>
        <strain evidence="44">14028s / SGSC 2262</strain>
    </source>
</reference>
<reference evidence="46" key="23">
    <citation type="journal article" date="2023" name="Elife">
        <title>A pH-sensitive switch activates virulence in Salmonella.</title>
        <authorList>
            <person name="Shetty D."/>
            <person name="Kenney L.J."/>
        </authorList>
    </citation>
    <scope>FUNCTION</scope>
    <scope>PHOSPHORYLATION AT ASP-56</scope>
    <scope>DISRUPTION PHENOTYPE</scope>
    <scope>MUTAGENESIS OF HIS-12; HIS-28; HIS-34 AND HIS-72</scope>
    <source>
        <strain evidence="45">14028s / SGSC 2262</strain>
    </source>
</reference>
<reference evidence="46" key="24">
    <citation type="journal article" date="2009" name="J. Biol. Chem.">
        <title>Structural and functional analysis of the C-terminal DNA binding domain of the Salmonella typhimurium SPI-2 response regulator SsrB.</title>
        <authorList>
            <person name="Carroll R.K."/>
            <person name="Liao X."/>
            <person name="Morgan L.K."/>
            <person name="Cicirelli E.M."/>
            <person name="Li Y."/>
            <person name="Sheng W."/>
            <person name="Feng X."/>
            <person name="Kenney L.J."/>
        </authorList>
    </citation>
    <scope>STRUCTURE BY NMR OF 138-212</scope>
    <scope>FUNCTION</scope>
    <scope>SUBUNIT</scope>
    <scope>DISULFIDE BOND</scope>
    <scope>MUTAGENESIS OF CYS-45; CYS-46; ASP-56; LYS-179; GLU-182; THR-183; MET-186; VAL-197; THR-198; LEU-201; ASN-202 AND CYS-203</scope>
    <source>
        <strain evidence="32">14028s / SGSC 2262</strain>
    </source>
</reference>
<comment type="function">
    <text evidence="4 5 6 7 8 9 10 13 14 15 16 17 18 19 20 21 22 24 25">Member of the two-component regulatory system SsrA/SsrB (SpiR/SsrB) that is required for intracellular proliferation and systemic dissemination within the host (PubMed:10844662, PubMed:18068913, PubMed:22418438, PubMed:25249283, PubMed:26497459, PubMed:30355489, PubMed:37706506). When inside acidic Salmonella-containing vesicles (SCV) within host cells the SsrA sensor kinase autophosphorylates and the phosphoryl group is transferred to the response regulator SsrB; phosphorylated SsrB activates the expression of genes encoding virulence proteins, including pathogenicity island 2 (SPI2) and other horizontally acquired genes, but also ancestral genes; it can stimulate gene expression both by recruiting RNA polymerase and by antagonizing the action of the transcriptional repressor hns (H-NS) (PubMed:10844662, PubMed:11844786, PubMed:15491370, PubMed:16304611, PubMed:17630976, PubMed:18068913, PubMed:19126546, PubMed:20300643, PubMed:20660761, PubMed:21059643, PubMed:22418438, PubMed:25249283, PubMed:30355489, PubMed:33045730, PubMed:37706506). Can also act independently of sensor kinase ssrA to support the dormant carrier state by directing the transcription of factors required for biofilm formation (PubMed:26880544). DNA-binding is stimulated by acidic pH conditions, and binding promotes bending of DNA both upstream and downstream of binding sites (PubMed:20300643, PubMed:21059643, PubMed:26880544, PubMed:31033442, PubMed:37706506). Binds a degenerate 18-basepair palindromic sequence with a 7-4-7 internal organization, and regulates gene expression from 86 operons (PubMed:20300643). When phosphorylated, activates the transcription of the ABC transporter complex dalSTUV, which helps protect the organism from oxidative killing by host neutrophils (PubMed:22418438). Binds the phoP promoter to stimulate expression in acidic pH conditions (PubMed:33045730). Antagonizes hns to activate the transcription of ugtL (PubMed:33045730). Following invasion of host cells, binds the hilD and hilA regulatory regions to repress their transcription and consequently to repress transcription of pathogenicity island 1 (SPI1) encoding genes involved in host cell invasion (PubMed:28704543). Binds the promoters of the flagellar master regulators flhD and flhC to repress their expression and consequently to suppress flagellar motility and promote evasion of the host inflammasome during infection of host cells (PubMed:25249283, PubMed:30355489). Activates expression of sseI/srfH, sifA, sifB, sseJ and regulates its own expression (PubMed:15491370, PubMed:17630976, PubMed:21059643). When unphosphorylated, relieves the hns-mediated repression of master biofilm regulator csgD by binding and bending the csgD regulatory region (PubMed:26880544). May act as early as in the lumen of the host small intestine, to activate the expression of virulence proteins prior to invasion of host cells (PubMed:16304611).</text>
</comment>
<comment type="subunit">
    <text evidence="10">Homodimer; disulfide-linked; dimerizes upon DNA-binding.</text>
</comment>
<comment type="subcellular location">
    <subcellularLocation>
        <location evidence="6 14">Cytoplasm</location>
    </subcellularLocation>
</comment>
<comment type="induction">
    <text evidence="22">Induced about 3-fold in acidic pH compared to in neutral pH.</text>
</comment>
<comment type="PTM">
    <text evidence="6 19 25">SsrB phosphorylated on Asp-56 activates the expression of virulence genes whereas the unphosphorylated form controls biofilm formation (PubMed:26880544). Independently of SsrA, can be phosphorylated by small inorganic phosphate donors (such as acetyl phosphate or phosphoramidate) (PubMed:15491370, PubMed:37706506).</text>
</comment>
<comment type="PTM">
    <text evidence="10">Disulfide bond formation at Cys-203 is not required for dimerization.</text>
</comment>
<comment type="PTM">
    <text evidence="14 22">Cys-203 may serve as a redox sensor that is nitrosylated in presence of reactive nitrogen species (RNS) generated by the host, the modification modulates its DNA-binding activity (PubMed:20660761). Cys-203 is relatively resistant to oxidation by hydrogen peroxide (PubMed:31033442).</text>
</comment>
<comment type="disruption phenotype">
    <text evidence="3 4 6 7 8 9 11 12 13 15 16 17 18 19 20 22 23 24 25">Decreases expression of genes encoding virulence proteins (PubMed:10209748, PubMed:10844662, PubMed:15491370, PubMed:16304611, PubMed:17630976, PubMed:19229334, PubMed:19858298, PubMed:20300643, PubMed:21059643, PubMed:22418438, PubMed:25249283, PubMed:26880544, PubMed:31033442, PubMed:32413287, PubMed:33045730, PubMed:37706506). Down-regulated targets are involved in transport, secretion, and trafficking of cellular components in addition to protein and membrane modification (PubMed:20300643). Increases expression of invasion protein invF following invasion of macrophages (PubMed:28704543). Regulation of gene expression is abnormal in conditions of acidic pH, during phosphate starvation and in low magnesium (PubMed:10209748, PubMed:31033442, PubMed:33045730, PubMed:37706506). Decreases survival in macrophages (PubMed:37706506). Decreases level of biofilm formation and abolishes expression of csgD; simultaneous knockout of hns suppresses the effect (PubMed:26880544). Leads to an increase in expression of flagellin when growing inside macrophages (PubMed:25249283). Sensitive to superoxide and hydrogen peroxide (PubMed:25249283). Decreases fitness in the spleen and liver of mouse (PubMed:32413287). Decreases fitness in oyster but does not appear to affect colonization of hemocytes (PubMed:26497459). Decreases virulence in a mouse infection model (PubMed:22418438, PubMed:33045730). Double knockout with ssrA leads to impaired replication in mouse and pig macrophages and decreases virulence in mouse and pig (PubMed:18068913, PubMed:19229334).</text>
</comment>
<comment type="miscellaneous">
    <text evidence="22">C-terminal tagging with photoactivatable mCherry abolishes the increase in activity seen at acidic pH, N-terminal tagging leads to slightly higher activity at acidic pH.</text>
</comment>
<comment type="caution">
    <text evidence="20 21 22">The Glu-56 mutant was reported as constitutively active (PubMed:28704543, PubMed:30355489). However the mutant was found to be defective in DNA-binding by a later study and it was argued that plasmid-expression of Glu-56 leads to inappropriate regulation (PubMed:31033442).</text>
</comment>
<protein>
    <recommendedName>
        <fullName evidence="46">Response regulator SsrB</fullName>
    </recommendedName>
</protein>
<proteinExistence type="evidence at protein level"/>
<keyword id="KW-0010">Activator</keyword>
<keyword id="KW-0963">Cytoplasm</keyword>
<keyword id="KW-1015">Disulfide bond</keyword>
<keyword id="KW-0238">DNA-binding</keyword>
<keyword id="KW-0597">Phosphoprotein</keyword>
<keyword id="KW-1185">Reference proteome</keyword>
<keyword id="KW-0702">S-nitrosylation</keyword>
<keyword id="KW-0804">Transcription</keyword>
<keyword id="KW-0805">Transcription regulation</keyword>
<keyword id="KW-0902">Two-component regulatory system</keyword>
<keyword id="KW-0843">Virulence</keyword>
<name>SSRB_SALTY</name>
<feature type="chain" id="PRO_0000460343" description="Response regulator SsrB">
    <location>
        <begin position="1"/>
        <end position="212"/>
    </location>
</feature>
<feature type="domain" description="Response regulatory" evidence="1">
    <location>
        <begin position="5"/>
        <end position="121"/>
    </location>
</feature>
<feature type="domain" description="HTH luxR-type" evidence="2">
    <location>
        <begin position="143"/>
        <end position="208"/>
    </location>
</feature>
<feature type="DNA-binding region" description="H-T-H motif" evidence="2">
    <location>
        <begin position="167"/>
        <end position="186"/>
    </location>
</feature>
<feature type="region of interest" description="Required for prevention of DNA binding in absence of phosphorylation and for full stimulation of activity by acidic pH" evidence="6 25">
    <location>
        <begin position="1"/>
        <end position="138"/>
    </location>
</feature>
<feature type="modified residue" description="4-aspartylphosphate" evidence="1">
    <location>
        <position position="56"/>
    </location>
</feature>
<feature type="modified residue" description="S-nitrosocysteine" evidence="14">
    <location>
        <position position="203"/>
    </location>
</feature>
<feature type="disulfide bond" description="Interchain" evidence="47">
    <location>
        <position position="203"/>
    </location>
</feature>
<feature type="mutagenesis site" description="Decreases activity at both neutral and acidic pH." evidence="25">
    <original>H</original>
    <variation>A</variation>
    <variation>N</variation>
    <variation>K</variation>
    <location>
        <position position="12"/>
    </location>
</feature>
<feature type="mutagenesis site" description="Decreases DNA-binding in neutral pH, but activation of activity by acidic pH is normal." evidence="25">
    <original>H</original>
    <variation>F</variation>
    <location>
        <position position="12"/>
    </location>
</feature>
<feature type="mutagenesis site" description="Perturbs phosphorylation at D-56 both at neutral and acidic pH. No effect on DNA-binding at neutral pH, but abolishes activation of activity by acidic pH and decreases survival in macrophages." evidence="25">
    <original>H</original>
    <variation>Q</variation>
    <location>
        <position position="12"/>
    </location>
</feature>
<feature type="mutagenesis site" description="Decreases DNA-binding in neutral pH, but activation of activity by acidic pH is normal. Decreases transcriptional activator activity and survival in host cells." evidence="25">
    <original>H</original>
    <variation>Y</variation>
    <location>
        <position position="12"/>
    </location>
</feature>
<feature type="mutagenesis site" description="Does not affect its activation by acidic pH; when associated with A-34 and A-72." evidence="25">
    <original>H</original>
    <variation>A</variation>
    <location>
        <position position="28"/>
    </location>
</feature>
<feature type="mutagenesis site" description="Does not affect its activation by acidic pH; when associated with A-28 and A-72." evidence="25">
    <original>H</original>
    <variation>A</variation>
    <location>
        <position position="34"/>
    </location>
</feature>
<feature type="mutagenesis site" description="Strongly decreases activity and may affect its ability to dimerize." evidence="10">
    <original>C</original>
    <variation>A</variation>
    <variation>S</variation>
    <location>
        <position position="45"/>
    </location>
</feature>
<feature type="mutagenesis site" description="Increases activity." evidence="10">
    <original>C</original>
    <variation>A</variation>
    <location>
        <position position="46"/>
    </location>
</feature>
<feature type="mutagenesis site" description="Strongly decreases DNA-binding activity; leads to abnormal regulation of virulence gene expression. Does not affect biofilm formation." evidence="6 10 19 22">
    <original>D</original>
    <variation>A</variation>
    <location>
        <position position="56"/>
    </location>
</feature>
<feature type="mutagenesis site" description="Has been reported to abolish the DNA binding activity stimulated by acidic pH. Constitutively active; leads to the up-regulation of genes involved in defense against the host innate immune system and down-regulation of genes involved in the cellular invasion machinery and motility. Decreases the number of flagella and swimming motility." evidence="20 21 22">
    <original>D</original>
    <variation>E</variation>
    <location>
        <position position="56"/>
    </location>
</feature>
<feature type="mutagenesis site" description="Does not affect its activation by acidic pH; when associated with A-28 and A-34." evidence="25">
    <original>H</original>
    <variation>A</variation>
    <location>
        <position position="72"/>
    </location>
</feature>
<feature type="mutagenesis site" description="Abolishes the DNA binding activity stimulated by acidic pH." evidence="10 19 22">
    <original>K</original>
    <variation>A</variation>
    <location>
        <position position="179"/>
    </location>
</feature>
<feature type="mutagenesis site" description="Decreases activity." evidence="10">
    <original>E</original>
    <variation>A</variation>
    <location>
        <position position="182"/>
    </location>
</feature>
<feature type="mutagenesis site" description="Increases activity." evidence="10">
    <original>T</original>
    <variation>A</variation>
    <location>
        <position position="183"/>
    </location>
</feature>
<feature type="mutagenesis site" description="Strongly decreases activity." evidence="10">
    <original>M</original>
    <variation>A</variation>
    <location>
        <position position="186"/>
    </location>
</feature>
<feature type="mutagenesis site" description="Strongly decreases activity. Abnormal recruitment of RNA polymerase." evidence="10 24">
    <original>V</original>
    <variation>A</variation>
    <location>
        <position position="197"/>
    </location>
</feature>
<feature type="mutagenesis site" description="Mildly decreases activity." evidence="10">
    <original>T</original>
    <variation>A</variation>
    <location>
        <position position="198"/>
    </location>
</feature>
<feature type="mutagenesis site" description="Strongly decreases activity." evidence="10">
    <original>L</original>
    <variation>A</variation>
    <location>
        <position position="201"/>
    </location>
</feature>
<feature type="mutagenesis site" description="Mildly decreases activity." evidence="10">
    <original>N</original>
    <variation>A</variation>
    <location>
        <position position="202"/>
    </location>
</feature>
<feature type="mutagenesis site" description="No effect on activity." evidence="10">
    <original>C</original>
    <variation>A</variation>
    <location>
        <position position="203"/>
    </location>
</feature>
<feature type="mutagenesis site" description="Abolishes DNA-binding." evidence="10">
    <original>C</original>
    <variation>D</variation>
    <location>
        <position position="203"/>
    </location>
</feature>
<feature type="mutagenesis site" description="Decreases activity." evidence="10">
    <original>C</original>
    <variation>E</variation>
    <location>
        <position position="203"/>
    </location>
</feature>
<feature type="mutagenesis site" description="Abolishes S-nitrosylation of SsrB. No apparent effect on DNA-binding. Mildly decreases activity. Resistant to methyl-3,4-dephostatin. Decreases virulence in a mouse model of acute gastrointestinal infection. Decreases virulence in a mouse model of acute oral infection; the effect is suppressed by treatment with the nitric oxide synthase inhibitor N6-(1-iminoethyl)-L-lysine, dihydrochloride (L-NIL)." evidence="10 14 23">
    <original>C</original>
    <variation>S</variation>
    <location>
        <position position="203"/>
    </location>
</feature>
<accession>Q7CQM5</accession>